<sequence length="380" mass="42782">MTIIRKKHPLIKIINHSFIDLPAPSNISSWWNFGSLLGLCLAIQILTGLFLAMHYTSDTATAFSSVTHICRDVNYGWLIRYMHANGASMFFICLFLHVGRGVYYGSYNMIETWNMGVILLFAVMATAFMGYVLPWGQMSFWGATVITNLLSAIPYIGTTLVEWIWGGFSVDKATLTRFFAFHFILPFIITALVLVHLLFLHETGSNNPTGLNSDADKIPFHPYYTIKDLLGVLVLLMAFMILTLFFPDILGDPDNYTPANPLNTPPHIKPEWYFLFAYAILRSIPNKLGGVLALILSILILALMPLLHTSKQRALTFRPITQTMYWILVADLLVLTWIGGQPVEYPFIIIGQTASITYFAIIMILMPIAGMIENNILDLD</sequence>
<evidence type="ECO:0000250" key="1"/>
<evidence type="ECO:0000250" key="2">
    <source>
        <dbReference type="UniProtKB" id="P00157"/>
    </source>
</evidence>
<evidence type="ECO:0000255" key="3">
    <source>
        <dbReference type="PROSITE-ProRule" id="PRU00967"/>
    </source>
</evidence>
<evidence type="ECO:0000255" key="4">
    <source>
        <dbReference type="PROSITE-ProRule" id="PRU00968"/>
    </source>
</evidence>
<comment type="function">
    <text evidence="2">Component of the ubiquinol-cytochrome c reductase complex (complex III or cytochrome b-c1 complex) that is part of the mitochondrial respiratory chain. The b-c1 complex mediates electron transfer from ubiquinol to cytochrome c. Contributes to the generation of a proton gradient across the mitochondrial membrane that is then used for ATP synthesis.</text>
</comment>
<comment type="cofactor">
    <cofactor evidence="2">
        <name>heme b</name>
        <dbReference type="ChEBI" id="CHEBI:60344"/>
    </cofactor>
    <text evidence="2">Binds 2 heme b groups non-covalently.</text>
</comment>
<comment type="subunit">
    <text evidence="2">The cytochrome bc1 complex contains 11 subunits: 3 respiratory subunits (MT-CYB, CYC1 and UQCRFS1), 2 core proteins (UQCRC1 and UQCRC2) and 6 low-molecular weight proteins (UQCRH/QCR6, UQCRB/QCR7, UQCRQ/QCR8, UQCR10/QCR9, UQCR11/QCR10 and a cleavage product of UQCRFS1). This cytochrome bc1 complex then forms a dimer.</text>
</comment>
<comment type="subcellular location">
    <subcellularLocation>
        <location evidence="2">Mitochondrion inner membrane</location>
        <topology evidence="2">Multi-pass membrane protein</topology>
    </subcellularLocation>
</comment>
<comment type="miscellaneous">
    <text evidence="1">Heme 1 (or BL or b562) is low-potential and absorbs at about 562 nm, and heme 2 (or BH or b566) is high-potential and absorbs at about 566 nm.</text>
</comment>
<comment type="similarity">
    <text evidence="3 4">Belongs to the cytochrome b family.</text>
</comment>
<comment type="caution">
    <text evidence="2">The full-length protein contains only eight transmembrane helices, not nine as predicted by bioinformatics tools.</text>
</comment>
<feature type="chain" id="PRO_0000255085" description="Cytochrome b">
    <location>
        <begin position="1"/>
        <end position="380"/>
    </location>
</feature>
<feature type="transmembrane region" description="Helical" evidence="2">
    <location>
        <begin position="33"/>
        <end position="53"/>
    </location>
</feature>
<feature type="transmembrane region" description="Helical" evidence="2">
    <location>
        <begin position="77"/>
        <end position="98"/>
    </location>
</feature>
<feature type="transmembrane region" description="Helical" evidence="2">
    <location>
        <begin position="113"/>
        <end position="133"/>
    </location>
</feature>
<feature type="transmembrane region" description="Helical" evidence="2">
    <location>
        <begin position="178"/>
        <end position="198"/>
    </location>
</feature>
<feature type="transmembrane region" description="Helical" evidence="2">
    <location>
        <begin position="226"/>
        <end position="246"/>
    </location>
</feature>
<feature type="transmembrane region" description="Helical" evidence="2">
    <location>
        <begin position="288"/>
        <end position="308"/>
    </location>
</feature>
<feature type="transmembrane region" description="Helical" evidence="2">
    <location>
        <begin position="320"/>
        <end position="340"/>
    </location>
</feature>
<feature type="transmembrane region" description="Helical" evidence="2">
    <location>
        <begin position="347"/>
        <end position="367"/>
    </location>
</feature>
<feature type="binding site" description="axial binding residue" evidence="2">
    <location>
        <position position="83"/>
    </location>
    <ligand>
        <name>heme b</name>
        <dbReference type="ChEBI" id="CHEBI:60344"/>
        <label>b562</label>
    </ligand>
    <ligandPart>
        <name>Fe</name>
        <dbReference type="ChEBI" id="CHEBI:18248"/>
    </ligandPart>
</feature>
<feature type="binding site" description="axial binding residue" evidence="2">
    <location>
        <position position="97"/>
    </location>
    <ligand>
        <name>heme b</name>
        <dbReference type="ChEBI" id="CHEBI:60344"/>
        <label>b566</label>
    </ligand>
    <ligandPart>
        <name>Fe</name>
        <dbReference type="ChEBI" id="CHEBI:18248"/>
    </ligandPart>
</feature>
<feature type="binding site" description="axial binding residue" evidence="2">
    <location>
        <position position="182"/>
    </location>
    <ligand>
        <name>heme b</name>
        <dbReference type="ChEBI" id="CHEBI:60344"/>
        <label>b562</label>
    </ligand>
    <ligandPart>
        <name>Fe</name>
        <dbReference type="ChEBI" id="CHEBI:18248"/>
    </ligandPart>
</feature>
<feature type="binding site" description="axial binding residue" evidence="2">
    <location>
        <position position="196"/>
    </location>
    <ligand>
        <name>heme b</name>
        <dbReference type="ChEBI" id="CHEBI:60344"/>
        <label>b566</label>
    </ligand>
    <ligandPart>
        <name>Fe</name>
        <dbReference type="ChEBI" id="CHEBI:18248"/>
    </ligandPart>
</feature>
<feature type="binding site" evidence="2">
    <location>
        <position position="201"/>
    </location>
    <ligand>
        <name>a ubiquinone</name>
        <dbReference type="ChEBI" id="CHEBI:16389"/>
    </ligand>
</feature>
<feature type="sequence variant" description="In strain: Isolate 2.">
    <original>V</original>
    <variation>I</variation>
    <location>
        <position position="102"/>
    </location>
</feature>
<feature type="sequence variant" description="In strain: Isolate 2.">
    <original>V</original>
    <variation>I</variation>
    <location>
        <position position="117"/>
    </location>
</feature>
<name>CYB_MICLS</name>
<keyword id="KW-0249">Electron transport</keyword>
<keyword id="KW-0349">Heme</keyword>
<keyword id="KW-0408">Iron</keyword>
<keyword id="KW-0472">Membrane</keyword>
<keyword id="KW-0479">Metal-binding</keyword>
<keyword id="KW-0496">Mitochondrion</keyword>
<keyword id="KW-0999">Mitochondrion inner membrane</keyword>
<keyword id="KW-0679">Respiratory chain</keyword>
<keyword id="KW-0812">Transmembrane</keyword>
<keyword id="KW-1133">Transmembrane helix</keyword>
<keyword id="KW-0813">Transport</keyword>
<keyword id="KW-0830">Ubiquinone</keyword>
<accession>Q6JDS4</accession>
<accession>Q6JDS3</accession>
<gene>
    <name type="primary">MT-CYB</name>
    <name type="synonym">COB</name>
    <name type="synonym">CYTB</name>
    <name type="synonym">MTCYB</name>
</gene>
<protein>
    <recommendedName>
        <fullName>Cytochrome b</fullName>
    </recommendedName>
    <alternativeName>
        <fullName>Complex III subunit 3</fullName>
    </alternativeName>
    <alternativeName>
        <fullName>Complex III subunit III</fullName>
    </alternativeName>
    <alternativeName>
        <fullName>Cytochrome b-c1 complex subunit 3</fullName>
    </alternativeName>
    <alternativeName>
        <fullName>Ubiquinol-cytochrome-c reductase complex cytochrome b subunit</fullName>
    </alternativeName>
</protein>
<organism>
    <name type="scientific">Microtus lusitanicus</name>
    <name type="common">Lusitanian pine vole</name>
    <dbReference type="NCBI Taxonomy" id="184258"/>
    <lineage>
        <taxon>Eukaryota</taxon>
        <taxon>Metazoa</taxon>
        <taxon>Chordata</taxon>
        <taxon>Craniata</taxon>
        <taxon>Vertebrata</taxon>
        <taxon>Euteleostomi</taxon>
        <taxon>Mammalia</taxon>
        <taxon>Eutheria</taxon>
        <taxon>Euarchontoglires</taxon>
        <taxon>Glires</taxon>
        <taxon>Rodentia</taxon>
        <taxon>Myomorpha</taxon>
        <taxon>Muroidea</taxon>
        <taxon>Cricetidae</taxon>
        <taxon>Arvicolinae</taxon>
        <taxon>Microtus</taxon>
    </lineage>
</organism>
<proteinExistence type="inferred from homology"/>
<reference key="1">
    <citation type="journal article" date="2004" name="Mol. Phylogenet. Evol.">
        <title>Molecular phylogeny of the speciose vole genus Microtus (Arvicolinae, Rodentia) inferred from mitochondrial DNA sequences.</title>
        <authorList>
            <person name="Jaarola M."/>
            <person name="Martinkova N."/>
            <person name="Gunduz I."/>
            <person name="Brunhoff C."/>
            <person name="Zima J."/>
            <person name="Nadachowski A."/>
            <person name="Amori G."/>
            <person name="Bulatova N.S."/>
            <person name="Chondropoulos B."/>
            <person name="Fraguedakis-Tsolis S."/>
            <person name="Gonzalez-Esteban J."/>
            <person name="Lopez-Fuster M.J."/>
            <person name="Kandaurov A.S."/>
            <person name="Kefelioglu H."/>
            <person name="Mathias M.L."/>
            <person name="Villate I."/>
            <person name="Searle J.B."/>
        </authorList>
    </citation>
    <scope>NUCLEOTIDE SEQUENCE [GENOMIC DNA]</scope>
    <source>
        <strain>Isolate 1</strain>
        <strain>Isolate 2</strain>
    </source>
</reference>
<dbReference type="EMBL" id="AY513812">
    <property type="protein sequence ID" value="AAS82804.1"/>
    <property type="molecule type" value="Genomic_DNA"/>
</dbReference>
<dbReference type="EMBL" id="AY513813">
    <property type="protein sequence ID" value="AAS82805.1"/>
    <property type="molecule type" value="Genomic_DNA"/>
</dbReference>
<dbReference type="SMR" id="Q6JDS4"/>
<dbReference type="GO" id="GO:0005743">
    <property type="term" value="C:mitochondrial inner membrane"/>
    <property type="evidence" value="ECO:0007669"/>
    <property type="project" value="UniProtKB-SubCell"/>
</dbReference>
<dbReference type="GO" id="GO:0045275">
    <property type="term" value="C:respiratory chain complex III"/>
    <property type="evidence" value="ECO:0007669"/>
    <property type="project" value="InterPro"/>
</dbReference>
<dbReference type="GO" id="GO:0046872">
    <property type="term" value="F:metal ion binding"/>
    <property type="evidence" value="ECO:0007669"/>
    <property type="project" value="UniProtKB-KW"/>
</dbReference>
<dbReference type="GO" id="GO:0008121">
    <property type="term" value="F:ubiquinol-cytochrome-c reductase activity"/>
    <property type="evidence" value="ECO:0007669"/>
    <property type="project" value="InterPro"/>
</dbReference>
<dbReference type="GO" id="GO:0006122">
    <property type="term" value="P:mitochondrial electron transport, ubiquinol to cytochrome c"/>
    <property type="evidence" value="ECO:0007669"/>
    <property type="project" value="TreeGrafter"/>
</dbReference>
<dbReference type="CDD" id="cd00290">
    <property type="entry name" value="cytochrome_b_C"/>
    <property type="match status" value="1"/>
</dbReference>
<dbReference type="CDD" id="cd00284">
    <property type="entry name" value="Cytochrome_b_N"/>
    <property type="match status" value="1"/>
</dbReference>
<dbReference type="FunFam" id="1.20.810.10:FF:000002">
    <property type="entry name" value="Cytochrome b"/>
    <property type="match status" value="1"/>
</dbReference>
<dbReference type="Gene3D" id="1.20.810.10">
    <property type="entry name" value="Cytochrome Bc1 Complex, Chain C"/>
    <property type="match status" value="1"/>
</dbReference>
<dbReference type="InterPro" id="IPR005798">
    <property type="entry name" value="Cyt_b/b6_C"/>
</dbReference>
<dbReference type="InterPro" id="IPR036150">
    <property type="entry name" value="Cyt_b/b6_C_sf"/>
</dbReference>
<dbReference type="InterPro" id="IPR005797">
    <property type="entry name" value="Cyt_b/b6_N"/>
</dbReference>
<dbReference type="InterPro" id="IPR027387">
    <property type="entry name" value="Cytb/b6-like_sf"/>
</dbReference>
<dbReference type="InterPro" id="IPR030689">
    <property type="entry name" value="Cytochrome_b"/>
</dbReference>
<dbReference type="InterPro" id="IPR048260">
    <property type="entry name" value="Cytochrome_b_C_euk/bac"/>
</dbReference>
<dbReference type="InterPro" id="IPR048259">
    <property type="entry name" value="Cytochrome_b_N_euk/bac"/>
</dbReference>
<dbReference type="InterPro" id="IPR016174">
    <property type="entry name" value="Di-haem_cyt_TM"/>
</dbReference>
<dbReference type="PANTHER" id="PTHR19271">
    <property type="entry name" value="CYTOCHROME B"/>
    <property type="match status" value="1"/>
</dbReference>
<dbReference type="PANTHER" id="PTHR19271:SF16">
    <property type="entry name" value="CYTOCHROME B"/>
    <property type="match status" value="1"/>
</dbReference>
<dbReference type="Pfam" id="PF00032">
    <property type="entry name" value="Cytochrom_B_C"/>
    <property type="match status" value="1"/>
</dbReference>
<dbReference type="Pfam" id="PF00033">
    <property type="entry name" value="Cytochrome_B"/>
    <property type="match status" value="1"/>
</dbReference>
<dbReference type="PIRSF" id="PIRSF038885">
    <property type="entry name" value="COB"/>
    <property type="match status" value="1"/>
</dbReference>
<dbReference type="SUPFAM" id="SSF81648">
    <property type="entry name" value="a domain/subunit of cytochrome bc1 complex (Ubiquinol-cytochrome c reductase)"/>
    <property type="match status" value="1"/>
</dbReference>
<dbReference type="SUPFAM" id="SSF81342">
    <property type="entry name" value="Transmembrane di-heme cytochromes"/>
    <property type="match status" value="1"/>
</dbReference>
<dbReference type="PROSITE" id="PS51003">
    <property type="entry name" value="CYTB_CTER"/>
    <property type="match status" value="1"/>
</dbReference>
<dbReference type="PROSITE" id="PS51002">
    <property type="entry name" value="CYTB_NTER"/>
    <property type="match status" value="1"/>
</dbReference>
<geneLocation type="mitochondrion"/>